<feature type="chain" id="PRO_0000310429" description="DDB1- and CUL4-associated factor 13">
    <location>
        <begin position="1"/>
        <end position="445"/>
    </location>
</feature>
<feature type="repeat" description="WD 1">
    <location>
        <begin position="64"/>
        <end position="104"/>
    </location>
</feature>
<feature type="repeat" description="WD 2">
    <location>
        <begin position="107"/>
        <end position="146"/>
    </location>
</feature>
<feature type="repeat" description="WD 3">
    <location>
        <begin position="149"/>
        <end position="191"/>
    </location>
</feature>
<feature type="repeat" description="WD 4">
    <location>
        <begin position="194"/>
        <end position="234"/>
    </location>
</feature>
<feature type="repeat" description="WD 5">
    <location>
        <begin position="236"/>
        <end position="276"/>
    </location>
</feature>
<feature type="repeat" description="WD 6">
    <location>
        <begin position="280"/>
        <end position="319"/>
    </location>
</feature>
<feature type="repeat" description="WD 7">
    <location>
        <begin position="323"/>
        <end position="362"/>
    </location>
</feature>
<feature type="region of interest" description="Required for nucleolar location" evidence="2">
    <location>
        <begin position="353"/>
        <end position="441"/>
    </location>
</feature>
<feature type="modified residue" description="N6-acetyllysine" evidence="1">
    <location>
        <position position="49"/>
    </location>
</feature>
<feature type="sequence conflict" description="In Ref. 2; AAH60375." evidence="8" ref="2">
    <original>S</original>
    <variation>T</variation>
    <location>
        <position position="81"/>
    </location>
</feature>
<comment type="function">
    <text evidence="1 3">Part of the small subunit (SSU) processome, first precursor of the small eukaryotic ribosomal subunit. During the assembly of the SSU processome in the nucleolus, many ribosome biogenesis factors, an RNA chaperone and ribosomal proteins associate with the nascent pre-rRNA and work in concert to generate RNA folding, modifications, rearrangements and cleavage as well as targeted degradation of pre-ribosomal RNA by the RNA exosome (By similarity). Participates in the 18S rRNA processing in growing oocytes, being essential for oocyte nonsurrounded nucleolus (NSN) to surrounded nucleolus (SN) transition (PubMed:30283081).</text>
</comment>
<comment type="function">
    <text evidence="2 4 5 6 7">Substrate-recognition component of a DCX (DDB1-CUL4-X-box) E3 ubiquitin-protein ligase complex that plays a key role in embryo preimplantation and is required for normal meiotic cycle progression in oocytes (PubMed:30111536, PubMed:31492966). Acts as a maternal factor that regulates oocyte and zygotic chromatin tightness during maternal to zygotic transition (PubMed:31000741). Also involved in the transformation of the endometrium into the decidua, known as decidualization, providing a solid foundation for implantation of blastocysts (PubMed:35932979). Recognizes the histone methyltransferases SUV39H1 and SUV39H2 and directs them to polyubiquitination and proteasomal degradation, which facilitates the H3K9me3 removal and early zygotic gene expression, essential steps for progressive genome reprogramming and the establishment of pluripotency during preimplantation embryonic development (PubMed:30111536). Supports the spindle assembly and chromosome condensation during oocyte meiotic division by targeting the polyubiquitination and degradation of PTEN, a lipid phosphatase that inhibits PI3K pathway as well as oocyte growth and maturation (PubMed:31492966). Targets PMP22 for polyubiquitination and proteasomal degradation (PubMed:35178836).</text>
</comment>
<comment type="pathway">
    <text>Protein modification; protein ubiquitination.</text>
</comment>
<comment type="subunit">
    <text evidence="1 2 5 6">Component of the DCX(DCAF13) E3 ubiquitin ligase complex, at least composed of CUL4 (CUL4A or CUL4B), DDB1, DCAF13 and RBX1. Interacts (via WD40 domain) with DDB1 (PubMed:30111536, PubMed:31492966, PubMed:35178836). Interacts with ESR1 and LATS1 (By similarity).</text>
</comment>
<comment type="subcellular location">
    <subcellularLocation>
        <location evidence="2 3 4">Nucleus</location>
        <location evidence="2 3 4">Nucleolus</location>
    </subcellularLocation>
    <text evidence="1">In the nucleolus, localizes predominantly in the granular component, but also detected in the fibrillar center and dense fibrillar component.</text>
</comment>
<comment type="tissue specificity">
    <text evidence="2 3 7">Uniformly distributed in trophectoderm cells and inner cells mass in blastocyst embryos (PubMed:30111536). Expressed in oocytes as early as the primordial follicle stage (PubMed:30283081). Endometrial expression increases during decidualization and is highly expressed in decidua (PubMed:35932979).</text>
</comment>
<comment type="developmental stage">
    <text evidence="2 3">In embryo, expressed as early as the four-cell stage and continue to accumulate in morulae and blastocysts (at protein level) (PubMed:30111536). Expressed in growing oocytes with the nonsurrounded nucleolus configuration, reaches a peak in oocytes within pre-antral and early antral follicles and nearly disappears in the fully grown oocyte with the surrounded nucleolus configuration (PubMed:30283081).</text>
</comment>
<comment type="disruption phenotype">
    <text evidence="2 3 4 7">Knockout embryos are arrested at the eight- to sixteen-cell stage before compaction causing preimplantation-stage mortality (PubMed:30111536). Mutant embryos are morphologically normal up to the eight-cell stage but they do not compact, fail to develop into blastocysts and die at the morula stage (PubMed:30111536). Oocyte-specific knockout females are infertile (PubMed:30283081, PubMed:31000741). The ovaries of 8-week-old females are significantly smaller than those of wild-type females and are devoid of follicles containing more than two layers of granulosa cells and corpora lutea. The ovaries are deficient in follicles beyond the secondary follicle stage and contained fewer primordial follicles than the control ovaries. At 5 months of age, oocytes disappear in the ovaries and only primordial and primary follicles are seen in the mutant ovaries (PubMed:30283081). Oocyte-specific maternal knockout embryos display arrest at the two-cell stage (PubMed:31000741). Conditional knockout females under the control of progesterone receptor fail to undergo decidualization (PubMed:35932979).</text>
</comment>
<comment type="similarity">
    <text evidence="8">Belongs to the WD repeat DCAF13/WDSOF1 family.</text>
</comment>
<dbReference type="EMBL" id="AC164883">
    <property type="status" value="NOT_ANNOTATED_CDS"/>
    <property type="molecule type" value="Genomic_DNA"/>
</dbReference>
<dbReference type="EMBL" id="AC165352">
    <property type="status" value="NOT_ANNOTATED_CDS"/>
    <property type="molecule type" value="Genomic_DNA"/>
</dbReference>
<dbReference type="EMBL" id="BC060375">
    <property type="protein sequence ID" value="AAH60375.1"/>
    <property type="molecule type" value="mRNA"/>
</dbReference>
<dbReference type="CCDS" id="CCDS37066.1"/>
<dbReference type="RefSeq" id="NP_941008.2">
    <property type="nucleotide sequence ID" value="NM_198606.3"/>
</dbReference>
<dbReference type="SMR" id="Q6PAC3"/>
<dbReference type="BioGRID" id="230153">
    <property type="interactions" value="31"/>
</dbReference>
<dbReference type="FunCoup" id="Q6PAC3">
    <property type="interactions" value="3814"/>
</dbReference>
<dbReference type="IntAct" id="Q6PAC3">
    <property type="interactions" value="1"/>
</dbReference>
<dbReference type="STRING" id="10090.ENSMUSP00000022909"/>
<dbReference type="iPTMnet" id="Q6PAC3"/>
<dbReference type="PhosphoSitePlus" id="Q6PAC3"/>
<dbReference type="PaxDb" id="10090-ENSMUSP00000022909"/>
<dbReference type="PeptideAtlas" id="Q6PAC3"/>
<dbReference type="ProteomicsDB" id="279279"/>
<dbReference type="Pumba" id="Q6PAC3"/>
<dbReference type="Antibodypedia" id="26392">
    <property type="antibodies" value="102 antibodies from 15 providers"/>
</dbReference>
<dbReference type="DNASU" id="223499"/>
<dbReference type="Ensembl" id="ENSMUST00000022909.10">
    <property type="protein sequence ID" value="ENSMUSP00000022909.9"/>
    <property type="gene ID" value="ENSMUSG00000022300.11"/>
</dbReference>
<dbReference type="GeneID" id="223499"/>
<dbReference type="KEGG" id="mmu:223499"/>
<dbReference type="UCSC" id="uc007voc.2">
    <property type="organism name" value="mouse"/>
</dbReference>
<dbReference type="AGR" id="MGI:2684929"/>
<dbReference type="CTD" id="25879"/>
<dbReference type="MGI" id="MGI:2684929">
    <property type="gene designation" value="Dcaf13"/>
</dbReference>
<dbReference type="VEuPathDB" id="HostDB:ENSMUSG00000022300"/>
<dbReference type="eggNOG" id="KOG0268">
    <property type="taxonomic scope" value="Eukaryota"/>
</dbReference>
<dbReference type="GeneTree" id="ENSGT00390000005711"/>
<dbReference type="HOGENOM" id="CLU_033999_0_0_1"/>
<dbReference type="InParanoid" id="Q6PAC3"/>
<dbReference type="OMA" id="EDHNAYI"/>
<dbReference type="OrthoDB" id="10249065at2759"/>
<dbReference type="PhylomeDB" id="Q6PAC3"/>
<dbReference type="TreeFam" id="TF300844"/>
<dbReference type="Reactome" id="R-MMU-6791226">
    <property type="pathway name" value="Major pathway of rRNA processing in the nucleolus and cytosol"/>
</dbReference>
<dbReference type="Reactome" id="R-MMU-8951664">
    <property type="pathway name" value="Neddylation"/>
</dbReference>
<dbReference type="UniPathway" id="UPA00143"/>
<dbReference type="BioGRID-ORCS" id="223499">
    <property type="hits" value="22 hits in 81 CRISPR screens"/>
</dbReference>
<dbReference type="ChiTaRS" id="Dcaf13">
    <property type="organism name" value="mouse"/>
</dbReference>
<dbReference type="PRO" id="PR:Q6PAC3"/>
<dbReference type="Proteomes" id="UP000000589">
    <property type="component" value="Chromosome 15"/>
</dbReference>
<dbReference type="RNAct" id="Q6PAC3">
    <property type="molecule type" value="protein"/>
</dbReference>
<dbReference type="Bgee" id="ENSMUSG00000022300">
    <property type="expression patterns" value="Expressed in blastoderm cell in morula and 68 other cell types or tissues"/>
</dbReference>
<dbReference type="GO" id="GO:0030054">
    <property type="term" value="C:cell junction"/>
    <property type="evidence" value="ECO:0007669"/>
    <property type="project" value="Ensembl"/>
</dbReference>
<dbReference type="GO" id="GO:0005813">
    <property type="term" value="C:centrosome"/>
    <property type="evidence" value="ECO:0007669"/>
    <property type="project" value="Ensembl"/>
</dbReference>
<dbReference type="GO" id="GO:0080008">
    <property type="term" value="C:Cul4-RING E3 ubiquitin ligase complex"/>
    <property type="evidence" value="ECO:0000314"/>
    <property type="project" value="UniProtKB"/>
</dbReference>
<dbReference type="GO" id="GO:0005829">
    <property type="term" value="C:cytosol"/>
    <property type="evidence" value="ECO:0007669"/>
    <property type="project" value="Ensembl"/>
</dbReference>
<dbReference type="GO" id="GO:0005730">
    <property type="term" value="C:nucleolus"/>
    <property type="evidence" value="ECO:0000314"/>
    <property type="project" value="UniProtKB"/>
</dbReference>
<dbReference type="GO" id="GO:0005654">
    <property type="term" value="C:nucleoplasm"/>
    <property type="evidence" value="ECO:0007669"/>
    <property type="project" value="Ensembl"/>
</dbReference>
<dbReference type="GO" id="GO:1990904">
    <property type="term" value="C:ribonucleoprotein complex"/>
    <property type="evidence" value="ECO:0007669"/>
    <property type="project" value="UniProtKB-KW"/>
</dbReference>
<dbReference type="GO" id="GO:0030331">
    <property type="term" value="F:nuclear estrogen receptor binding"/>
    <property type="evidence" value="ECO:0007669"/>
    <property type="project" value="Ensembl"/>
</dbReference>
<dbReference type="GO" id="GO:1990756">
    <property type="term" value="F:ubiquitin-like ligase-substrate adaptor activity"/>
    <property type="evidence" value="ECO:0000314"/>
    <property type="project" value="UniProtKB"/>
</dbReference>
<dbReference type="GO" id="GO:0046697">
    <property type="term" value="P:decidualization"/>
    <property type="evidence" value="ECO:0000314"/>
    <property type="project" value="UniProtKB"/>
</dbReference>
<dbReference type="GO" id="GO:0044725">
    <property type="term" value="P:epigenetic programming in the zygotic pronuclei"/>
    <property type="evidence" value="ECO:0007669"/>
    <property type="project" value="Ensembl"/>
</dbReference>
<dbReference type="GO" id="GO:0001555">
    <property type="term" value="P:oocyte growth"/>
    <property type="evidence" value="ECO:0000314"/>
    <property type="project" value="UniProtKB"/>
</dbReference>
<dbReference type="GO" id="GO:0043161">
    <property type="term" value="P:proteasome-mediated ubiquitin-dependent protein catabolic process"/>
    <property type="evidence" value="ECO:0007669"/>
    <property type="project" value="Ensembl"/>
</dbReference>
<dbReference type="GO" id="GO:0016567">
    <property type="term" value="P:protein ubiquitination"/>
    <property type="evidence" value="ECO:0007669"/>
    <property type="project" value="UniProtKB-UniPathway"/>
</dbReference>
<dbReference type="GO" id="GO:0006364">
    <property type="term" value="P:rRNA processing"/>
    <property type="evidence" value="ECO:0000314"/>
    <property type="project" value="UniProtKB"/>
</dbReference>
<dbReference type="GO" id="GO:0007056">
    <property type="term" value="P:spindle assembly involved in female meiosis"/>
    <property type="evidence" value="ECO:0007669"/>
    <property type="project" value="Ensembl"/>
</dbReference>
<dbReference type="CDD" id="cd00200">
    <property type="entry name" value="WD40"/>
    <property type="match status" value="1"/>
</dbReference>
<dbReference type="FunFam" id="2.130.10.10:FF:000132">
    <property type="entry name" value="DDB1- and CUL4-associated factor 13"/>
    <property type="match status" value="1"/>
</dbReference>
<dbReference type="FunFam" id="2.130.10.10:FF:000269">
    <property type="entry name" value="DDB1- and CUL4-associated factor 13"/>
    <property type="match status" value="1"/>
</dbReference>
<dbReference type="Gene3D" id="2.130.10.10">
    <property type="entry name" value="YVTN repeat-like/Quinoprotein amine dehydrogenase"/>
    <property type="match status" value="2"/>
</dbReference>
<dbReference type="InterPro" id="IPR007287">
    <property type="entry name" value="Sof1"/>
</dbReference>
<dbReference type="InterPro" id="IPR015943">
    <property type="entry name" value="WD40/YVTN_repeat-like_dom_sf"/>
</dbReference>
<dbReference type="InterPro" id="IPR019775">
    <property type="entry name" value="WD40_repeat_CS"/>
</dbReference>
<dbReference type="InterPro" id="IPR036322">
    <property type="entry name" value="WD40_repeat_dom_sf"/>
</dbReference>
<dbReference type="InterPro" id="IPR001680">
    <property type="entry name" value="WD40_rpt"/>
</dbReference>
<dbReference type="InterPro" id="IPR051733">
    <property type="entry name" value="WD_repeat_DCAF13/WDSOF1"/>
</dbReference>
<dbReference type="PANTHER" id="PTHR22851:SF0">
    <property type="entry name" value="DDB1- AND CUL4-ASSOCIATED FACTOR 13"/>
    <property type="match status" value="1"/>
</dbReference>
<dbReference type="PANTHER" id="PTHR22851">
    <property type="entry name" value="U3 SMALL NUCLEOLAR RNA U3 SNORNA ASSOCIATED PROTEIN"/>
    <property type="match status" value="1"/>
</dbReference>
<dbReference type="Pfam" id="PF04158">
    <property type="entry name" value="Sof1"/>
    <property type="match status" value="1"/>
</dbReference>
<dbReference type="Pfam" id="PF00400">
    <property type="entry name" value="WD40"/>
    <property type="match status" value="5"/>
</dbReference>
<dbReference type="SMART" id="SM00320">
    <property type="entry name" value="WD40"/>
    <property type="match status" value="5"/>
</dbReference>
<dbReference type="SUPFAM" id="SSF50978">
    <property type="entry name" value="WD40 repeat-like"/>
    <property type="match status" value="1"/>
</dbReference>
<dbReference type="PROSITE" id="PS00678">
    <property type="entry name" value="WD_REPEATS_1"/>
    <property type="match status" value="1"/>
</dbReference>
<dbReference type="PROSITE" id="PS50082">
    <property type="entry name" value="WD_REPEATS_2"/>
    <property type="match status" value="3"/>
</dbReference>
<dbReference type="PROSITE" id="PS50294">
    <property type="entry name" value="WD_REPEATS_REGION"/>
    <property type="match status" value="1"/>
</dbReference>
<evidence type="ECO:0000250" key="1">
    <source>
        <dbReference type="UniProtKB" id="Q9NV06"/>
    </source>
</evidence>
<evidence type="ECO:0000269" key="2">
    <source>
    </source>
</evidence>
<evidence type="ECO:0000269" key="3">
    <source>
    </source>
</evidence>
<evidence type="ECO:0000269" key="4">
    <source>
    </source>
</evidence>
<evidence type="ECO:0000269" key="5">
    <source>
    </source>
</evidence>
<evidence type="ECO:0000269" key="6">
    <source>
    </source>
</evidence>
<evidence type="ECO:0000269" key="7">
    <source>
    </source>
</evidence>
<evidence type="ECO:0000305" key="8"/>
<name>DCA13_MOUSE</name>
<sequence>MKVKMLSRNPDNYVRETKLDIQRVPRNYDPTLHPFEVPREYVRALNATKLERVFAKPFLASLDGHRDGVNCLAKHPKSLASVLSGACDGEVKIWNLTKRKCIRTIQAHEGFVRGMCTRFCGTSFFTVGDDKTVKQWKMDGPGYGEEEEPLYTVLGKTVYTGIDHHWKDPVFATCGQQVDIWDEQRTSPVCSMNWGFDSISSVKFNPVETFLLGSCASDRNIVLYDMRQATPLKKVILEMRTNTICWNPMEAFNFTAANEDYNLYTFDMRALDTPVMVHMDHVSAVLDVDYSPTGKEFVSASFDKSIRIFPVDKSRSREVYHTKRMQHVMCVKWTSDSKYIMCGSDEMNIRLWKANASEKLGVLTSREKAANDYNQKLKEKFQYHPHVKRIARHRHLPKSIYSQIQEQRVMKEARRRKEMNRRKHSKPGSVPIVSERKKHVVAVVK</sequence>
<reference key="1">
    <citation type="journal article" date="2009" name="PLoS Biol.">
        <title>Lineage-specific biology revealed by a finished genome assembly of the mouse.</title>
        <authorList>
            <person name="Church D.M."/>
            <person name="Goodstadt L."/>
            <person name="Hillier L.W."/>
            <person name="Zody M.C."/>
            <person name="Goldstein S."/>
            <person name="She X."/>
            <person name="Bult C.J."/>
            <person name="Agarwala R."/>
            <person name="Cherry J.L."/>
            <person name="DiCuccio M."/>
            <person name="Hlavina W."/>
            <person name="Kapustin Y."/>
            <person name="Meric P."/>
            <person name="Maglott D."/>
            <person name="Birtle Z."/>
            <person name="Marques A.C."/>
            <person name="Graves T."/>
            <person name="Zhou S."/>
            <person name="Teague B."/>
            <person name="Potamousis K."/>
            <person name="Churas C."/>
            <person name="Place M."/>
            <person name="Herschleb J."/>
            <person name="Runnheim R."/>
            <person name="Forrest D."/>
            <person name="Amos-Landgraf J."/>
            <person name="Schwartz D.C."/>
            <person name="Cheng Z."/>
            <person name="Lindblad-Toh K."/>
            <person name="Eichler E.E."/>
            <person name="Ponting C.P."/>
        </authorList>
    </citation>
    <scope>NUCLEOTIDE SEQUENCE [LARGE SCALE GENOMIC DNA]</scope>
    <source>
        <strain>C57BL/6J</strain>
    </source>
</reference>
<reference key="2">
    <citation type="journal article" date="2004" name="Genome Res.">
        <title>The status, quality, and expansion of the NIH full-length cDNA project: the Mammalian Gene Collection (MGC).</title>
        <authorList>
            <consortium name="The MGC Project Team"/>
        </authorList>
    </citation>
    <scope>NUCLEOTIDE SEQUENCE [LARGE SCALE MRNA]</scope>
    <source>
        <strain>Czech II</strain>
        <tissue>Mammary tumor</tissue>
    </source>
</reference>
<reference key="3">
    <citation type="journal article" date="2018" name="EMBO J.">
        <title>DCAF13 promotes pluripotency by negatively regulating SUV39H1 stability during early embryonic development.</title>
        <authorList>
            <person name="Zhang Y.L."/>
            <person name="Zhao L.W."/>
            <person name="Zhang J."/>
            <person name="Le R."/>
            <person name="Ji S.Y."/>
            <person name="Chen C."/>
            <person name="Gao Y."/>
            <person name="Li D."/>
            <person name="Gao S."/>
            <person name="Fan H.Y."/>
        </authorList>
    </citation>
    <scope>FUNCTION</scope>
    <scope>IDENTIFICATION IN THE DCX(DCAF13) COMPLEX</scope>
    <scope>DEVELOPMENTAL STAGE</scope>
    <scope>DISRUPTION PHENOTYPE</scope>
    <scope>SUBCELLULAR LOCATION</scope>
    <scope>TISSUE SPECIFICITY</scope>
    <scope>INTERACTION WITH DDB1</scope>
</reference>
<reference key="4">
    <citation type="journal article" date="2019" name="Cell Death Differ.">
        <title>Mammalian nucleolar protein DCAF13 is essential for ovarian follicle maintenance and oocyte growth by mediating rRNA processing.</title>
        <authorList>
            <person name="Zhang J."/>
            <person name="Zhang Y.L."/>
            <person name="Zhao L.W."/>
            <person name="Guo J.X."/>
            <person name="Yu J.L."/>
            <person name="Ji S.Y."/>
            <person name="Cao L.R."/>
            <person name="Zhang S.Y."/>
            <person name="Shen L."/>
            <person name="Ou X.H."/>
            <person name="Fan H.Y."/>
        </authorList>
    </citation>
    <scope>FUNCTION</scope>
    <scope>DEVELOPMENTAL STAGE</scope>
    <scope>DISRUPTION PHENOTYPE</scope>
    <scope>SUBCELLULAR LOCATION</scope>
    <scope>TISSUE SPECIFICITY</scope>
</reference>
<reference key="5">
    <citation type="journal article" date="2019" name="Sci. Rep.">
        <title>Maternal DCAF13 Regulates Chromatin Tightness to Contribute to Embryonic Development.</title>
        <authorList>
            <person name="Liu Y."/>
            <person name="Zhao L.W."/>
            <person name="Shen J.L."/>
            <person name="Fan H.Y."/>
            <person name="Jin Y."/>
        </authorList>
    </citation>
    <scope>FUNCTION</scope>
    <scope>SUBCELLULAR LOCATION</scope>
</reference>
<reference key="6">
    <citation type="journal article" date="2020" name="Cell. Mol. Life Sci.">
        <title>The CRL4-DCAF13 ubiquitin E3 ligase supports oocyte meiotic resumption by targeting PTEN degradation.</title>
        <authorList>
            <person name="Zhang J."/>
            <person name="Zhang Y.L."/>
            <person name="Zhao L.W."/>
            <person name="Pi S.B."/>
            <person name="Zhang S.Y."/>
            <person name="Tong C."/>
            <person name="Fan H.Y."/>
        </authorList>
    </citation>
    <scope>FUNCTION</scope>
    <scope>IDENTIFICATION IN THE DCX(DCAF13) COMPLEX</scope>
</reference>
<reference key="7">
    <citation type="journal article" date="2022" name="Cancer Sci.">
        <title>DCAF13 promotes breast cancer cell proliferation by ubiquitin inhibiting PERP expression.</title>
        <authorList>
            <person name="Shan B.Q."/>
            <person name="Wang X.M."/>
            <person name="Zheng L."/>
            <person name="Han Y."/>
            <person name="Gao J."/>
            <person name="Lv M.D."/>
            <person name="Zhang Y."/>
            <person name="Liu Y.X."/>
            <person name="Zhang H."/>
            <person name="Chen H.S."/>
            <person name="Ao L."/>
            <person name="Zhang Y.L."/>
            <person name="Lu X."/>
            <person name="Wu Z.J."/>
            <person name="Xu Y."/>
            <person name="Che X."/>
            <person name="Heger M."/>
            <person name="Cheng S.Q."/>
            <person name="Pan W.W."/>
            <person name="Zhang X."/>
        </authorList>
    </citation>
    <scope>FUNCTION</scope>
    <scope>IDENTIFICATION IN THE DCX(DCAF13) COMPLEX</scope>
</reference>
<reference key="8">
    <citation type="journal article" date="2022" name="Mol. Cell. Endocrinol.">
        <title>DCAF13 is essential for the pathogenesis of preeclampsia through its involvement in endometrial decidualization.</title>
        <authorList>
            <person name="Yan X."/>
            <person name="Rong M."/>
            <person name="Zhou Q."/>
            <person name="Zhang C."/>
        </authorList>
    </citation>
    <scope>FUNCTION</scope>
    <scope>DISRUPTION PHENOTYPE</scope>
    <scope>TISSUE SPECIFICITY</scope>
</reference>
<keyword id="KW-0007">Acetylation</keyword>
<keyword id="KW-0539">Nucleus</keyword>
<keyword id="KW-1185">Reference proteome</keyword>
<keyword id="KW-0677">Repeat</keyword>
<keyword id="KW-0687">Ribonucleoprotein</keyword>
<keyword id="KW-0690">Ribosome biogenesis</keyword>
<keyword id="KW-0698">rRNA processing</keyword>
<keyword id="KW-0833">Ubl conjugation pathway</keyword>
<keyword id="KW-0853">WD repeat</keyword>
<organism>
    <name type="scientific">Mus musculus</name>
    <name type="common">Mouse</name>
    <dbReference type="NCBI Taxonomy" id="10090"/>
    <lineage>
        <taxon>Eukaryota</taxon>
        <taxon>Metazoa</taxon>
        <taxon>Chordata</taxon>
        <taxon>Craniata</taxon>
        <taxon>Vertebrata</taxon>
        <taxon>Euteleostomi</taxon>
        <taxon>Mammalia</taxon>
        <taxon>Eutheria</taxon>
        <taxon>Euarchontoglires</taxon>
        <taxon>Glires</taxon>
        <taxon>Rodentia</taxon>
        <taxon>Myomorpha</taxon>
        <taxon>Muroidea</taxon>
        <taxon>Muridae</taxon>
        <taxon>Murinae</taxon>
        <taxon>Mus</taxon>
        <taxon>Mus</taxon>
    </lineage>
</organism>
<gene>
    <name type="primary">Dcaf13</name>
    <name type="synonym">Gm83</name>
    <name type="synonym">Wdsof1</name>
</gene>
<protein>
    <recommendedName>
        <fullName>DDB1- and CUL4-associated factor 13</fullName>
    </recommendedName>
    <alternativeName>
        <fullName>WD repeat and SOF domain-containing protein 1</fullName>
    </alternativeName>
</protein>
<accession>Q6PAC3</accession>
<accession>E9QPL0</accession>
<proteinExistence type="evidence at protein level"/>